<comment type="function">
    <text>Modifies the specificity of McrB restriction by expanding the range of modified sequences restricted. Does not bind to DNA.</text>
</comment>
<comment type="interaction">
    <interactant intactId="EBI-25407271">
        <id>P15006</id>
    </interactant>
    <interactant intactId="EBI-552513">
        <id>P15005</id>
        <label>mcrB</label>
    </interactant>
    <organismsDiffer>false</organismsDiffer>
    <experiments>2</experiments>
</comment>
<comment type="sequence caution" evidence="2">
    <conflict type="erroneous initiation">
        <sequence resource="EMBL-CDS" id="AAA24146"/>
    </conflict>
</comment>
<feature type="chain" id="PRO_0000077381" description="Type IV methyl-directed restriction enzyme EcoKMcrBC">
    <location>
        <begin position="1"/>
        <end position="348"/>
    </location>
</feature>
<feature type="helix" evidence="3">
    <location>
        <begin position="8"/>
        <end position="18"/>
    </location>
</feature>
<feature type="helix" evidence="3">
    <location>
        <begin position="29"/>
        <end position="32"/>
    </location>
</feature>
<feature type="helix" evidence="3">
    <location>
        <begin position="38"/>
        <end position="53"/>
    </location>
</feature>
<feature type="turn" evidence="3">
    <location>
        <begin position="54"/>
        <end position="56"/>
    </location>
</feature>
<feature type="strand" evidence="3">
    <location>
        <begin position="61"/>
        <end position="71"/>
    </location>
</feature>
<feature type="strand" evidence="3">
    <location>
        <begin position="74"/>
        <end position="76"/>
    </location>
</feature>
<feature type="helix" evidence="3">
    <location>
        <begin position="80"/>
        <end position="83"/>
    </location>
</feature>
<feature type="turn" evidence="3">
    <location>
        <begin position="84"/>
        <end position="88"/>
    </location>
</feature>
<feature type="strand" evidence="3">
    <location>
        <begin position="92"/>
        <end position="101"/>
    </location>
</feature>
<feature type="helix" evidence="3">
    <location>
        <begin position="104"/>
        <end position="117"/>
    </location>
</feature>
<feature type="strand" evidence="3">
    <location>
        <begin position="118"/>
        <end position="122"/>
    </location>
</feature>
<feature type="helix" evidence="3">
    <location>
        <begin position="124"/>
        <end position="135"/>
    </location>
</feature>
<feature type="helix" evidence="3">
    <location>
        <begin position="147"/>
        <end position="150"/>
    </location>
</feature>
<feature type="turn" evidence="3">
    <location>
        <begin position="151"/>
        <end position="153"/>
    </location>
</feature>
<feature type="strand" evidence="3">
    <location>
        <begin position="154"/>
        <end position="157"/>
    </location>
</feature>
<feature type="helix" evidence="3">
    <location>
        <begin position="162"/>
        <end position="174"/>
    </location>
</feature>
<feature type="strand" evidence="3">
    <location>
        <begin position="175"/>
        <end position="177"/>
    </location>
</feature>
<feature type="strand" evidence="3">
    <location>
        <begin position="185"/>
        <end position="187"/>
    </location>
</feature>
<feature type="helix" evidence="3">
    <location>
        <begin position="194"/>
        <end position="204"/>
    </location>
</feature>
<feature type="helix" evidence="3">
    <location>
        <begin position="206"/>
        <end position="210"/>
    </location>
</feature>
<feature type="turn" evidence="3">
    <location>
        <begin position="211"/>
        <end position="213"/>
    </location>
</feature>
<feature type="strand" evidence="3">
    <location>
        <begin position="244"/>
        <end position="249"/>
    </location>
</feature>
<feature type="strand" evidence="3">
    <location>
        <begin position="252"/>
        <end position="258"/>
    </location>
</feature>
<feature type="helix" evidence="3">
    <location>
        <begin position="263"/>
        <end position="266"/>
    </location>
</feature>
<feature type="helix" evidence="3">
    <location>
        <begin position="279"/>
        <end position="288"/>
    </location>
</feature>
<feature type="strand" evidence="3">
    <location>
        <begin position="297"/>
        <end position="302"/>
    </location>
</feature>
<feature type="strand" evidence="3">
    <location>
        <begin position="306"/>
        <end position="308"/>
    </location>
</feature>
<feature type="strand" evidence="3">
    <location>
        <begin position="312"/>
        <end position="315"/>
    </location>
</feature>
<feature type="strand" evidence="3">
    <location>
        <begin position="317"/>
        <end position="319"/>
    </location>
</feature>
<feature type="strand" evidence="3">
    <location>
        <begin position="321"/>
        <end position="324"/>
    </location>
</feature>
<feature type="helix" evidence="3">
    <location>
        <begin position="332"/>
        <end position="344"/>
    </location>
</feature>
<accession>P15006</accession>
<accession>Q2M5X1</accession>
<gene>
    <name type="primary">mcrC</name>
    <name type="ordered locus">b4345</name>
    <name type="ordered locus">JW5789</name>
</gene>
<protein>
    <recommendedName>
        <fullName evidence="1">Type IV methyl-directed restriction enzyme EcoKMcrBC</fullName>
        <shortName evidence="1">EcoKMcrBC</shortName>
    </recommendedName>
    <alternativeName>
        <fullName>Protein McrC</fullName>
    </alternativeName>
</protein>
<organism>
    <name type="scientific">Escherichia coli (strain K12)</name>
    <dbReference type="NCBI Taxonomy" id="83333"/>
    <lineage>
        <taxon>Bacteria</taxon>
        <taxon>Pseudomonadati</taxon>
        <taxon>Pseudomonadota</taxon>
        <taxon>Gammaproteobacteria</taxon>
        <taxon>Enterobacterales</taxon>
        <taxon>Enterobacteriaceae</taxon>
        <taxon>Escherichia</taxon>
    </lineage>
</organism>
<dbReference type="EMBL" id="M58752">
    <property type="protein sequence ID" value="AAA24146.1"/>
    <property type="status" value="ALT_INIT"/>
    <property type="molecule type" value="Genomic_DNA"/>
</dbReference>
<dbReference type="EMBL" id="M24927">
    <property type="protein sequence ID" value="AAA24144.1"/>
    <property type="molecule type" value="Genomic_DNA"/>
</dbReference>
<dbReference type="EMBL" id="U14003">
    <property type="protein sequence ID" value="AAA97242.1"/>
    <property type="molecule type" value="Genomic_DNA"/>
</dbReference>
<dbReference type="EMBL" id="U00096">
    <property type="protein sequence ID" value="AAC77301.1"/>
    <property type="molecule type" value="Genomic_DNA"/>
</dbReference>
<dbReference type="EMBL" id="AP009048">
    <property type="protein sequence ID" value="BAE78335.1"/>
    <property type="molecule type" value="Genomic_DNA"/>
</dbReference>
<dbReference type="PIR" id="JS0121">
    <property type="entry name" value="BVECMB"/>
</dbReference>
<dbReference type="RefSeq" id="NP_418765.1">
    <property type="nucleotide sequence ID" value="NC_000913.3"/>
</dbReference>
<dbReference type="RefSeq" id="WP_000437621.1">
    <property type="nucleotide sequence ID" value="NZ_LN832404.1"/>
</dbReference>
<dbReference type="PDB" id="6HZ4">
    <property type="method" value="EM"/>
    <property type="resolution" value="3.60 A"/>
    <property type="chains" value="M/N=1-348"/>
</dbReference>
<dbReference type="PDB" id="6HZ5">
    <property type="method" value="EM"/>
    <property type="resolution" value="4.20 A"/>
    <property type="chains" value="M/N=1-348"/>
</dbReference>
<dbReference type="PDB" id="6HZ6">
    <property type="method" value="EM"/>
    <property type="resolution" value="4.30 A"/>
    <property type="chains" value="M/N=1-348"/>
</dbReference>
<dbReference type="PDB" id="6HZ7">
    <property type="method" value="EM"/>
    <property type="resolution" value="4.30 A"/>
    <property type="chains" value="M/N=1-348"/>
</dbReference>
<dbReference type="PDB" id="6HZ8">
    <property type="method" value="EM"/>
    <property type="resolution" value="4.30 A"/>
    <property type="chains" value="M/N=1-348"/>
</dbReference>
<dbReference type="PDB" id="6HZ9">
    <property type="method" value="EM"/>
    <property type="resolution" value="4.80 A"/>
    <property type="chains" value="M/N=1-348"/>
</dbReference>
<dbReference type="PDB" id="6UT6">
    <property type="method" value="EM"/>
    <property type="resolution" value="3.28 A"/>
    <property type="chains" value="G=1-348"/>
</dbReference>
<dbReference type="PDB" id="7VSR">
    <property type="method" value="EM"/>
    <property type="resolution" value="4.50 A"/>
    <property type="chains" value="M/N=1-59, M/N=100-348"/>
</dbReference>
<dbReference type="PDBsum" id="6HZ4"/>
<dbReference type="PDBsum" id="6HZ5"/>
<dbReference type="PDBsum" id="6HZ6"/>
<dbReference type="PDBsum" id="6HZ7"/>
<dbReference type="PDBsum" id="6HZ8"/>
<dbReference type="PDBsum" id="6HZ9"/>
<dbReference type="PDBsum" id="6UT6"/>
<dbReference type="PDBsum" id="7VSR"/>
<dbReference type="EMDB" id="EMD-0310"/>
<dbReference type="EMDB" id="EMD-0311"/>
<dbReference type="EMDB" id="EMD-0312"/>
<dbReference type="EMDB" id="EMD-0313"/>
<dbReference type="EMDB" id="EMD-0314"/>
<dbReference type="EMDB" id="EMD-0315"/>
<dbReference type="EMDB" id="EMD-20867"/>
<dbReference type="EMDB" id="EMD-32114"/>
<dbReference type="SMR" id="P15006"/>
<dbReference type="BioGRID" id="4262764">
    <property type="interactions" value="182"/>
</dbReference>
<dbReference type="ComplexPortal" id="CPX-5285">
    <property type="entry name" value="McrBC 5-methylcytosine-specific restriction endonuclease complex"/>
</dbReference>
<dbReference type="FunCoup" id="P15006">
    <property type="interactions" value="6"/>
</dbReference>
<dbReference type="IntAct" id="P15006">
    <property type="interactions" value="1"/>
</dbReference>
<dbReference type="STRING" id="511145.b4345"/>
<dbReference type="REBASE" id="13377">
    <property type="entry name" value="EcoW3110McrBCP"/>
</dbReference>
<dbReference type="REBASE" id="2865">
    <property type="entry name" value="EcoKMcrBC"/>
</dbReference>
<dbReference type="REBASE" id="441251">
    <property type="entry name" value="EcoBL21FMcrBCP"/>
</dbReference>
<dbReference type="REBASE" id="618858">
    <property type="entry name" value="LspCC1McrBC2P"/>
</dbReference>
<dbReference type="PaxDb" id="511145-b4345"/>
<dbReference type="EnsemblBacteria" id="AAC77301">
    <property type="protein sequence ID" value="AAC77301"/>
    <property type="gene ID" value="b4345"/>
</dbReference>
<dbReference type="GeneID" id="948880"/>
<dbReference type="KEGG" id="ecj:JW5789"/>
<dbReference type="KEGG" id="eco:b4345"/>
<dbReference type="PATRIC" id="fig|1411691.4.peg.2341"/>
<dbReference type="EchoBASE" id="EB0570"/>
<dbReference type="eggNOG" id="COG4268">
    <property type="taxonomic scope" value="Bacteria"/>
</dbReference>
<dbReference type="HOGENOM" id="CLU_065564_0_0_6"/>
<dbReference type="InParanoid" id="P15006"/>
<dbReference type="OMA" id="IPIRNLW"/>
<dbReference type="OrthoDB" id="5500856at2"/>
<dbReference type="BioCyc" id="EcoCyc:EG10575-MONOMER"/>
<dbReference type="BioCyc" id="MetaCyc:EG10575-MONOMER"/>
<dbReference type="PRO" id="PR:P15006"/>
<dbReference type="Proteomes" id="UP000000625">
    <property type="component" value="Chromosome"/>
</dbReference>
<dbReference type="GO" id="GO:1905348">
    <property type="term" value="C:endonuclease complex"/>
    <property type="evidence" value="ECO:0000353"/>
    <property type="project" value="ComplexPortal"/>
</dbReference>
<dbReference type="GO" id="GO:0032067">
    <property type="term" value="F:type IV site-specific deoxyribonuclease activity"/>
    <property type="evidence" value="ECO:0000314"/>
    <property type="project" value="EcoCyc"/>
</dbReference>
<dbReference type="GO" id="GO:0009307">
    <property type="term" value="P:DNA restriction-modification system"/>
    <property type="evidence" value="ECO:0000303"/>
    <property type="project" value="ComplexPortal"/>
</dbReference>
<dbReference type="InterPro" id="IPR019292">
    <property type="entry name" value="McrC"/>
</dbReference>
<dbReference type="InterPro" id="IPR014407">
    <property type="entry name" value="McrC_bac"/>
</dbReference>
<dbReference type="NCBIfam" id="NF007277">
    <property type="entry name" value="PRK09736.1"/>
    <property type="match status" value="1"/>
</dbReference>
<dbReference type="PANTHER" id="PTHR38733">
    <property type="entry name" value="PROTEIN MCRC"/>
    <property type="match status" value="1"/>
</dbReference>
<dbReference type="PANTHER" id="PTHR38733:SF1">
    <property type="entry name" value="TYPE IV METHYL-DIRECTED RESTRICTION ENZYME ECOKMCRBC"/>
    <property type="match status" value="1"/>
</dbReference>
<dbReference type="Pfam" id="PF10117">
    <property type="entry name" value="McrBC"/>
    <property type="match status" value="1"/>
</dbReference>
<dbReference type="PIRSF" id="PIRSF003109">
    <property type="entry name" value="McrC"/>
    <property type="match status" value="1"/>
</dbReference>
<proteinExistence type="evidence at protein level"/>
<keyword id="KW-0002">3D-structure</keyword>
<keyword id="KW-0903">Direct protein sequencing</keyword>
<keyword id="KW-1185">Reference proteome</keyword>
<keyword id="KW-0680">Restriction system</keyword>
<sequence>MEQPVIPVRNIYYMLTYAWGYLQEIKQANLEAIPGNNLLDILGYVLNKGVLQLSRRGLELDYNPNTEIIPGIKGRIEFAKTIRGFHLNHGKTVSTFDMLNEDTLANRIIKSTLAILIKHEKLNSTIRDEARSLYRKLPGISTLHLTPQHFSYLNGGKNTRYYKFVISVCKFIVNNSIPGQNKGHYRFYDFERNEKEMSLLYQKFLYEFCRRELTSANTTRSYLKWDASSISDQSLNLLPRMETDITIRSSEKILIVDAKYYKSIFSRRMGTEKFHSQNLYQLMNYLWSLKPENGENIGGLLIYPHVDTAVKHRYKINGFDIGLCTVNLGQEWPCIHQELLDIFDEYLK</sequence>
<reference key="1">
    <citation type="journal article" date="1990" name="J. Bacteriol.">
        <title>Genetic and sequence organization of the mcrBC locus of Escherichia coli K-12.</title>
        <authorList>
            <person name="Dila D."/>
            <person name="Sutherland E."/>
            <person name="Moran L."/>
            <person name="Slatko B."/>
            <person name="Raleigh E.A."/>
        </authorList>
    </citation>
    <scope>NUCLEOTIDE SEQUENCE [GENOMIC DNA]</scope>
    <source>
        <strain>K12</strain>
    </source>
</reference>
<reference key="2">
    <citation type="journal article" date="1989" name="J. Bacteriol.">
        <title>Nucleotide sequence of the McrB region of Escherichia coli K-12 and evidence for two independent translational initiation sites at the mcrB locus.</title>
        <authorList>
            <person name="Ross T.K."/>
            <person name="Achberger E.C."/>
            <person name="Braymer H.D."/>
        </authorList>
    </citation>
    <scope>NUCLEOTIDE SEQUENCE [GENOMIC DNA]</scope>
    <source>
        <strain>K12</strain>
    </source>
</reference>
<reference key="3">
    <citation type="journal article" date="1995" name="Nucleic Acids Res.">
        <title>Analysis of the Escherichia coli genome VI: DNA sequence of the region from 92.8 through 100 minutes.</title>
        <authorList>
            <person name="Burland V.D."/>
            <person name="Plunkett G. III"/>
            <person name="Sofia H.J."/>
            <person name="Daniels D.L."/>
            <person name="Blattner F.R."/>
        </authorList>
    </citation>
    <scope>NUCLEOTIDE SEQUENCE [LARGE SCALE GENOMIC DNA]</scope>
    <source>
        <strain>K12 / MG1655 / ATCC 47076</strain>
    </source>
</reference>
<reference key="4">
    <citation type="journal article" date="1997" name="Science">
        <title>The complete genome sequence of Escherichia coli K-12.</title>
        <authorList>
            <person name="Blattner F.R."/>
            <person name="Plunkett G. III"/>
            <person name="Bloch C.A."/>
            <person name="Perna N.T."/>
            <person name="Burland V."/>
            <person name="Riley M."/>
            <person name="Collado-Vides J."/>
            <person name="Glasner J.D."/>
            <person name="Rode C.K."/>
            <person name="Mayhew G.F."/>
            <person name="Gregor J."/>
            <person name="Davis N.W."/>
            <person name="Kirkpatrick H.A."/>
            <person name="Goeden M.A."/>
            <person name="Rose D.J."/>
            <person name="Mau B."/>
            <person name="Shao Y."/>
        </authorList>
    </citation>
    <scope>NUCLEOTIDE SEQUENCE [LARGE SCALE GENOMIC DNA]</scope>
    <source>
        <strain>K12 / MG1655 / ATCC 47076</strain>
    </source>
</reference>
<reference key="5">
    <citation type="journal article" date="2006" name="Mol. Syst. Biol.">
        <title>Highly accurate genome sequences of Escherichia coli K-12 strains MG1655 and W3110.</title>
        <authorList>
            <person name="Hayashi K."/>
            <person name="Morooka N."/>
            <person name="Yamamoto Y."/>
            <person name="Fujita K."/>
            <person name="Isono K."/>
            <person name="Choi S."/>
            <person name="Ohtsubo E."/>
            <person name="Baba T."/>
            <person name="Wanner B.L."/>
            <person name="Mori H."/>
            <person name="Horiuchi T."/>
        </authorList>
    </citation>
    <scope>NUCLEOTIDE SEQUENCE [LARGE SCALE GENOMIC DNA]</scope>
    <source>
        <strain>K12 / W3110 / ATCC 27325 / DSM 5911</strain>
    </source>
</reference>
<reference key="6">
    <citation type="journal article" date="1991" name="J. Bacteriol.">
        <title>Overproduction and purification of McrC protein from Escherichia coli K-12.</title>
        <authorList>
            <person name="Zheng L."/>
            <person name="Braymer H.D."/>
        </authorList>
    </citation>
    <scope>PROTEIN SEQUENCE OF 1-10</scope>
    <source>
        <strain>K12</strain>
    </source>
</reference>
<reference key="7">
    <citation type="journal article" date="1991" name="J. Bacteriol.">
        <authorList>
            <person name="Zheng L."/>
            <person name="Braymer H.D."/>
        </authorList>
    </citation>
    <scope>ERRATUM OF PUBMED:2050643</scope>
</reference>
<reference key="8">
    <citation type="journal article" date="2003" name="Nucleic Acids Res.">
        <title>A nomenclature for restriction enzymes, DNA methyltransferases, homing endonucleases and their genes.</title>
        <authorList>
            <person name="Roberts R.J."/>
            <person name="Belfort M."/>
            <person name="Bestor T."/>
            <person name="Bhagwat A.S."/>
            <person name="Bickle T.A."/>
            <person name="Bitinaite J."/>
            <person name="Blumenthal R.M."/>
            <person name="Degtyarev S.K."/>
            <person name="Dryden D.T."/>
            <person name="Dybvig K."/>
            <person name="Firman K."/>
            <person name="Gromova E.S."/>
            <person name="Gumport R.I."/>
            <person name="Halford S.E."/>
            <person name="Hattman S."/>
            <person name="Heitman J."/>
            <person name="Hornby D.P."/>
            <person name="Janulaitis A."/>
            <person name="Jeltsch A."/>
            <person name="Josephsen J."/>
            <person name="Kiss A."/>
            <person name="Klaenhammer T.R."/>
            <person name="Kobayashi I."/>
            <person name="Kong H."/>
            <person name="Krueger D.H."/>
            <person name="Lacks S."/>
            <person name="Marinus M.G."/>
            <person name="Miyahara M."/>
            <person name="Morgan R.D."/>
            <person name="Murray N.E."/>
            <person name="Nagaraja V."/>
            <person name="Piekarowicz A."/>
            <person name="Pingoud A."/>
            <person name="Raleigh E."/>
            <person name="Rao D.N."/>
            <person name="Reich N."/>
            <person name="Repin V.E."/>
            <person name="Selker E.U."/>
            <person name="Shaw P.C."/>
            <person name="Stein D.C."/>
            <person name="Stoddard B.L."/>
            <person name="Szybalski W."/>
            <person name="Trautner T.A."/>
            <person name="Van Etten J.L."/>
            <person name="Vitor J.M."/>
            <person name="Wilson G.G."/>
            <person name="Xu S.Y."/>
        </authorList>
    </citation>
    <scope>NOMENCLATURE</scope>
</reference>
<name>MCRC_ECOLI</name>
<evidence type="ECO:0000303" key="1">
    <source>
    </source>
</evidence>
<evidence type="ECO:0000305" key="2"/>
<evidence type="ECO:0007829" key="3">
    <source>
        <dbReference type="PDB" id="6UT6"/>
    </source>
</evidence>